<comment type="function">
    <text evidence="2">Catalyzes the formation of N(7)-methylguanine at position 46 (m7G46) in tRNA.</text>
</comment>
<comment type="catalytic activity">
    <reaction evidence="2">
        <text>guanosine(46) in tRNA + S-adenosyl-L-methionine = N(7)-methylguanosine(46) in tRNA + S-adenosyl-L-homocysteine</text>
        <dbReference type="Rhea" id="RHEA:42708"/>
        <dbReference type="Rhea" id="RHEA-COMP:10188"/>
        <dbReference type="Rhea" id="RHEA-COMP:10189"/>
        <dbReference type="ChEBI" id="CHEBI:57856"/>
        <dbReference type="ChEBI" id="CHEBI:59789"/>
        <dbReference type="ChEBI" id="CHEBI:74269"/>
        <dbReference type="ChEBI" id="CHEBI:74480"/>
        <dbReference type="EC" id="2.1.1.33"/>
    </reaction>
</comment>
<comment type="pathway">
    <text evidence="2">tRNA modification; N(7)-methylguanine-tRNA biosynthesis.</text>
</comment>
<comment type="similarity">
    <text evidence="2">Belongs to the class I-like SAM-binding methyltransferase superfamily. TrmB family.</text>
</comment>
<protein>
    <recommendedName>
        <fullName evidence="2">tRNA (guanine-N(7)-)-methyltransferase</fullName>
        <ecNumber evidence="2">2.1.1.33</ecNumber>
    </recommendedName>
    <alternativeName>
        <fullName evidence="2">tRNA (guanine(46)-N(7))-methyltransferase</fullName>
    </alternativeName>
    <alternativeName>
        <fullName evidence="2">tRNA(m7G46)-methyltransferase</fullName>
    </alternativeName>
</protein>
<sequence length="213" mass="24703">MRQRNKPWADEYLQENNHIVISDPKSKKGNWSQLFNNNNPIHVEIGSGKGQFILGMAKQYPEINFIGIELAKSIIVSAVQKIEEENLANVFMLNENAIDVREMFADDEISMIYLNFSDPWPKNRHEKRRLTYGRFLEQYQDILGANGEVILKTDNRGLFEYSVVSFSQNGMNINEINVDLHAIQDETNVMTEYEEKFSTKGQPIYRCKAAFEK</sequence>
<feature type="chain" id="PRO_0000171366" description="tRNA (guanine-N(7)-)-methyltransferase">
    <location>
        <begin position="1"/>
        <end position="213"/>
    </location>
</feature>
<feature type="region of interest" description="Interaction with RNA" evidence="2">
    <location>
        <begin position="124"/>
        <end position="129"/>
    </location>
</feature>
<feature type="active site" evidence="1">
    <location>
        <position position="118"/>
    </location>
</feature>
<feature type="binding site" evidence="2">
    <location>
        <position position="44"/>
    </location>
    <ligand>
        <name>S-adenosyl-L-methionine</name>
        <dbReference type="ChEBI" id="CHEBI:59789"/>
    </ligand>
</feature>
<feature type="binding site" evidence="2">
    <location>
        <position position="69"/>
    </location>
    <ligand>
        <name>S-adenosyl-L-methionine</name>
        <dbReference type="ChEBI" id="CHEBI:59789"/>
    </ligand>
</feature>
<feature type="binding site" evidence="2">
    <location>
        <position position="96"/>
    </location>
    <ligand>
        <name>S-adenosyl-L-methionine</name>
        <dbReference type="ChEBI" id="CHEBI:59789"/>
    </ligand>
</feature>
<feature type="binding site" evidence="2">
    <location>
        <position position="118"/>
    </location>
    <ligand>
        <name>S-adenosyl-L-methionine</name>
        <dbReference type="ChEBI" id="CHEBI:59789"/>
    </ligand>
</feature>
<feature type="binding site" evidence="2">
    <location>
        <position position="122"/>
    </location>
    <ligand>
        <name>substrate</name>
    </ligand>
</feature>
<feature type="binding site" evidence="2">
    <location>
        <position position="154"/>
    </location>
    <ligand>
        <name>substrate</name>
    </ligand>
</feature>
<feature type="binding site" evidence="2">
    <location>
        <begin position="191"/>
        <end position="194"/>
    </location>
    <ligand>
        <name>substrate</name>
    </ligand>
</feature>
<name>TRMB_OCEIH</name>
<keyword id="KW-0489">Methyltransferase</keyword>
<keyword id="KW-1185">Reference proteome</keyword>
<keyword id="KW-0949">S-adenosyl-L-methionine</keyword>
<keyword id="KW-0808">Transferase</keyword>
<keyword id="KW-0819">tRNA processing</keyword>
<gene>
    <name evidence="2" type="primary">trmB</name>
    <name type="ordered locus">OB2294</name>
</gene>
<organism>
    <name type="scientific">Oceanobacillus iheyensis (strain DSM 14371 / CIP 107618 / JCM 11309 / KCTC 3954 / HTE831)</name>
    <dbReference type="NCBI Taxonomy" id="221109"/>
    <lineage>
        <taxon>Bacteria</taxon>
        <taxon>Bacillati</taxon>
        <taxon>Bacillota</taxon>
        <taxon>Bacilli</taxon>
        <taxon>Bacillales</taxon>
        <taxon>Bacillaceae</taxon>
        <taxon>Oceanobacillus</taxon>
    </lineage>
</organism>
<dbReference type="EC" id="2.1.1.33" evidence="2"/>
<dbReference type="EMBL" id="BA000028">
    <property type="protein sequence ID" value="BAC14250.1"/>
    <property type="molecule type" value="Genomic_DNA"/>
</dbReference>
<dbReference type="RefSeq" id="WP_011066687.1">
    <property type="nucleotide sequence ID" value="NC_004193.1"/>
</dbReference>
<dbReference type="SMR" id="Q8EP25"/>
<dbReference type="STRING" id="221109.gene:10734542"/>
<dbReference type="KEGG" id="oih:OB2294"/>
<dbReference type="eggNOG" id="COG0220">
    <property type="taxonomic scope" value="Bacteria"/>
</dbReference>
<dbReference type="HOGENOM" id="CLU_050910_2_1_9"/>
<dbReference type="OrthoDB" id="9802090at2"/>
<dbReference type="PhylomeDB" id="Q8EP25"/>
<dbReference type="UniPathway" id="UPA00989"/>
<dbReference type="Proteomes" id="UP000000822">
    <property type="component" value="Chromosome"/>
</dbReference>
<dbReference type="GO" id="GO:0043527">
    <property type="term" value="C:tRNA methyltransferase complex"/>
    <property type="evidence" value="ECO:0007669"/>
    <property type="project" value="TreeGrafter"/>
</dbReference>
<dbReference type="GO" id="GO:0008176">
    <property type="term" value="F:tRNA (guanine(46)-N7)-methyltransferase activity"/>
    <property type="evidence" value="ECO:0007669"/>
    <property type="project" value="UniProtKB-UniRule"/>
</dbReference>
<dbReference type="CDD" id="cd02440">
    <property type="entry name" value="AdoMet_MTases"/>
    <property type="match status" value="1"/>
</dbReference>
<dbReference type="FunFam" id="3.40.50.150:FF:000035">
    <property type="entry name" value="tRNA (guanine-N(7)-)-methyltransferase"/>
    <property type="match status" value="1"/>
</dbReference>
<dbReference type="Gene3D" id="3.40.50.150">
    <property type="entry name" value="Vaccinia Virus protein VP39"/>
    <property type="match status" value="1"/>
</dbReference>
<dbReference type="HAMAP" id="MF_01057">
    <property type="entry name" value="tRNA_methyltr_TrmB"/>
    <property type="match status" value="1"/>
</dbReference>
<dbReference type="InterPro" id="IPR029063">
    <property type="entry name" value="SAM-dependent_MTases_sf"/>
</dbReference>
<dbReference type="InterPro" id="IPR003358">
    <property type="entry name" value="tRNA_(Gua-N-7)_MeTrfase_Trmb"/>
</dbReference>
<dbReference type="InterPro" id="IPR055361">
    <property type="entry name" value="tRNA_methyltr_TrmB_bact"/>
</dbReference>
<dbReference type="NCBIfam" id="NF001080">
    <property type="entry name" value="PRK00121.2-2"/>
    <property type="match status" value="1"/>
</dbReference>
<dbReference type="NCBIfam" id="TIGR00091">
    <property type="entry name" value="tRNA (guanosine(46)-N7)-methyltransferase TrmB"/>
    <property type="match status" value="1"/>
</dbReference>
<dbReference type="PANTHER" id="PTHR23417">
    <property type="entry name" value="3-DEOXY-D-MANNO-OCTULOSONIC-ACID TRANSFERASE/TRNA GUANINE-N 7 - -METHYLTRANSFERASE"/>
    <property type="match status" value="1"/>
</dbReference>
<dbReference type="PANTHER" id="PTHR23417:SF14">
    <property type="entry name" value="PENTACOTRIPEPTIDE-REPEAT REGION OF PRORP DOMAIN-CONTAINING PROTEIN"/>
    <property type="match status" value="1"/>
</dbReference>
<dbReference type="Pfam" id="PF02390">
    <property type="entry name" value="Methyltransf_4"/>
    <property type="match status" value="1"/>
</dbReference>
<dbReference type="SUPFAM" id="SSF53335">
    <property type="entry name" value="S-adenosyl-L-methionine-dependent methyltransferases"/>
    <property type="match status" value="1"/>
</dbReference>
<dbReference type="PROSITE" id="PS51625">
    <property type="entry name" value="SAM_MT_TRMB"/>
    <property type="match status" value="1"/>
</dbReference>
<reference key="1">
    <citation type="journal article" date="2002" name="Nucleic Acids Res.">
        <title>Genome sequence of Oceanobacillus iheyensis isolated from the Iheya Ridge and its unexpected adaptive capabilities to extreme environments.</title>
        <authorList>
            <person name="Takami H."/>
            <person name="Takaki Y."/>
            <person name="Uchiyama I."/>
        </authorList>
    </citation>
    <scope>NUCLEOTIDE SEQUENCE [LARGE SCALE GENOMIC DNA]</scope>
    <source>
        <strain>DSM 14371 / CIP 107618 / JCM 11309 / KCTC 3954 / HTE831</strain>
    </source>
</reference>
<proteinExistence type="inferred from homology"/>
<evidence type="ECO:0000250" key="1"/>
<evidence type="ECO:0000255" key="2">
    <source>
        <dbReference type="HAMAP-Rule" id="MF_01057"/>
    </source>
</evidence>
<accession>Q8EP25</accession>